<accession>A4YBX9</accession>
<protein>
    <recommendedName>
        <fullName evidence="1">Small ribosomal subunit protein uS19</fullName>
    </recommendedName>
    <alternativeName>
        <fullName evidence="2">30S ribosomal protein S19</fullName>
    </alternativeName>
</protein>
<proteinExistence type="inferred from homology"/>
<evidence type="ECO:0000255" key="1">
    <source>
        <dbReference type="HAMAP-Rule" id="MF_00531"/>
    </source>
</evidence>
<evidence type="ECO:0000305" key="2"/>
<name>RS19_SHEPC</name>
<reference key="1">
    <citation type="submission" date="2007-04" db="EMBL/GenBank/DDBJ databases">
        <title>Complete sequence of Shewanella putrefaciens CN-32.</title>
        <authorList>
            <consortium name="US DOE Joint Genome Institute"/>
            <person name="Copeland A."/>
            <person name="Lucas S."/>
            <person name="Lapidus A."/>
            <person name="Barry K."/>
            <person name="Detter J.C."/>
            <person name="Glavina del Rio T."/>
            <person name="Hammon N."/>
            <person name="Israni S."/>
            <person name="Dalin E."/>
            <person name="Tice H."/>
            <person name="Pitluck S."/>
            <person name="Chain P."/>
            <person name="Malfatti S."/>
            <person name="Shin M."/>
            <person name="Vergez L."/>
            <person name="Schmutz J."/>
            <person name="Larimer F."/>
            <person name="Land M."/>
            <person name="Hauser L."/>
            <person name="Kyrpides N."/>
            <person name="Mikhailova N."/>
            <person name="Romine M.F."/>
            <person name="Fredrickson J."/>
            <person name="Tiedje J."/>
            <person name="Richardson P."/>
        </authorList>
    </citation>
    <scope>NUCLEOTIDE SEQUENCE [LARGE SCALE GENOMIC DNA]</scope>
    <source>
        <strain>CN-32 / ATCC BAA-453</strain>
    </source>
</reference>
<comment type="function">
    <text evidence="1">Protein S19 forms a complex with S13 that binds strongly to the 16S ribosomal RNA.</text>
</comment>
<comment type="similarity">
    <text evidence="1">Belongs to the universal ribosomal protein uS19 family.</text>
</comment>
<sequence>MPRSLKKGPFIDLHLLKKVEKAMEAGDKKPIKTWSRRSMIIPNMIGLTIAVHNGRQHVPVFVTDEMIGHKLGEFSPTRTYRGHAADKKAKKR</sequence>
<dbReference type="EMBL" id="CP000681">
    <property type="protein sequence ID" value="ABP77462.1"/>
    <property type="molecule type" value="Genomic_DNA"/>
</dbReference>
<dbReference type="SMR" id="A4YBX9"/>
<dbReference type="STRING" id="319224.Sputcn32_3755"/>
<dbReference type="KEGG" id="spc:Sputcn32_3755"/>
<dbReference type="eggNOG" id="COG0185">
    <property type="taxonomic scope" value="Bacteria"/>
</dbReference>
<dbReference type="HOGENOM" id="CLU_144911_0_1_6"/>
<dbReference type="GO" id="GO:0005737">
    <property type="term" value="C:cytoplasm"/>
    <property type="evidence" value="ECO:0007669"/>
    <property type="project" value="UniProtKB-ARBA"/>
</dbReference>
<dbReference type="GO" id="GO:0015935">
    <property type="term" value="C:small ribosomal subunit"/>
    <property type="evidence" value="ECO:0007669"/>
    <property type="project" value="InterPro"/>
</dbReference>
<dbReference type="GO" id="GO:0019843">
    <property type="term" value="F:rRNA binding"/>
    <property type="evidence" value="ECO:0007669"/>
    <property type="project" value="UniProtKB-UniRule"/>
</dbReference>
<dbReference type="GO" id="GO:0003735">
    <property type="term" value="F:structural constituent of ribosome"/>
    <property type="evidence" value="ECO:0007669"/>
    <property type="project" value="InterPro"/>
</dbReference>
<dbReference type="GO" id="GO:0000028">
    <property type="term" value="P:ribosomal small subunit assembly"/>
    <property type="evidence" value="ECO:0007669"/>
    <property type="project" value="TreeGrafter"/>
</dbReference>
<dbReference type="GO" id="GO:0006412">
    <property type="term" value="P:translation"/>
    <property type="evidence" value="ECO:0007669"/>
    <property type="project" value="UniProtKB-UniRule"/>
</dbReference>
<dbReference type="FunFam" id="3.30.860.10:FF:000001">
    <property type="entry name" value="30S ribosomal protein S19"/>
    <property type="match status" value="1"/>
</dbReference>
<dbReference type="Gene3D" id="3.30.860.10">
    <property type="entry name" value="30s Ribosomal Protein S19, Chain A"/>
    <property type="match status" value="1"/>
</dbReference>
<dbReference type="HAMAP" id="MF_00531">
    <property type="entry name" value="Ribosomal_uS19"/>
    <property type="match status" value="1"/>
</dbReference>
<dbReference type="InterPro" id="IPR002222">
    <property type="entry name" value="Ribosomal_uS19"/>
</dbReference>
<dbReference type="InterPro" id="IPR005732">
    <property type="entry name" value="Ribosomal_uS19_bac-type"/>
</dbReference>
<dbReference type="InterPro" id="IPR020934">
    <property type="entry name" value="Ribosomal_uS19_CS"/>
</dbReference>
<dbReference type="InterPro" id="IPR023575">
    <property type="entry name" value="Ribosomal_uS19_SF"/>
</dbReference>
<dbReference type="NCBIfam" id="TIGR01050">
    <property type="entry name" value="rpsS_bact"/>
    <property type="match status" value="1"/>
</dbReference>
<dbReference type="PANTHER" id="PTHR11880">
    <property type="entry name" value="RIBOSOMAL PROTEIN S19P FAMILY MEMBER"/>
    <property type="match status" value="1"/>
</dbReference>
<dbReference type="PANTHER" id="PTHR11880:SF8">
    <property type="entry name" value="SMALL RIBOSOMAL SUBUNIT PROTEIN US19M"/>
    <property type="match status" value="1"/>
</dbReference>
<dbReference type="Pfam" id="PF00203">
    <property type="entry name" value="Ribosomal_S19"/>
    <property type="match status" value="1"/>
</dbReference>
<dbReference type="PIRSF" id="PIRSF002144">
    <property type="entry name" value="Ribosomal_S19"/>
    <property type="match status" value="1"/>
</dbReference>
<dbReference type="PRINTS" id="PR00975">
    <property type="entry name" value="RIBOSOMALS19"/>
</dbReference>
<dbReference type="SUPFAM" id="SSF54570">
    <property type="entry name" value="Ribosomal protein S19"/>
    <property type="match status" value="1"/>
</dbReference>
<dbReference type="PROSITE" id="PS00323">
    <property type="entry name" value="RIBOSOMAL_S19"/>
    <property type="match status" value="1"/>
</dbReference>
<gene>
    <name evidence="1" type="primary">rpsS</name>
    <name type="ordered locus">Sputcn32_3755</name>
</gene>
<feature type="chain" id="PRO_1000051124" description="Small ribosomal subunit protein uS19">
    <location>
        <begin position="1"/>
        <end position="92"/>
    </location>
</feature>
<organism>
    <name type="scientific">Shewanella putrefaciens (strain CN-32 / ATCC BAA-453)</name>
    <dbReference type="NCBI Taxonomy" id="319224"/>
    <lineage>
        <taxon>Bacteria</taxon>
        <taxon>Pseudomonadati</taxon>
        <taxon>Pseudomonadota</taxon>
        <taxon>Gammaproteobacteria</taxon>
        <taxon>Alteromonadales</taxon>
        <taxon>Shewanellaceae</taxon>
        <taxon>Shewanella</taxon>
    </lineage>
</organism>
<keyword id="KW-0687">Ribonucleoprotein</keyword>
<keyword id="KW-0689">Ribosomal protein</keyword>
<keyword id="KW-0694">RNA-binding</keyword>
<keyword id="KW-0699">rRNA-binding</keyword>